<gene>
    <name evidence="1" type="primary">dapD</name>
    <name type="ordered locus">Nmul_A1851</name>
</gene>
<proteinExistence type="inferred from homology"/>
<name>DAPD_NITMU</name>
<protein>
    <recommendedName>
        <fullName evidence="1">2,3,4,5-tetrahydropyridine-2,6-dicarboxylate N-succinyltransferase</fullName>
        <ecNumber evidence="1">2.3.1.117</ecNumber>
    </recommendedName>
    <alternativeName>
        <fullName evidence="1">Tetrahydrodipicolinate N-succinyltransferase</fullName>
        <shortName evidence="1">THDP succinyltransferase</shortName>
        <shortName evidence="1">THP succinyltransferase</shortName>
        <shortName evidence="1">Tetrahydropicolinate succinylase</shortName>
    </alternativeName>
</protein>
<keyword id="KW-0012">Acyltransferase</keyword>
<keyword id="KW-0028">Amino-acid biosynthesis</keyword>
<keyword id="KW-0963">Cytoplasm</keyword>
<keyword id="KW-0220">Diaminopimelate biosynthesis</keyword>
<keyword id="KW-0457">Lysine biosynthesis</keyword>
<keyword id="KW-1185">Reference proteome</keyword>
<keyword id="KW-0677">Repeat</keyword>
<keyword id="KW-0808">Transferase</keyword>
<comment type="catalytic activity">
    <reaction evidence="1">
        <text>(S)-2,3,4,5-tetrahydrodipicolinate + succinyl-CoA + H2O = (S)-2-succinylamino-6-oxoheptanedioate + CoA</text>
        <dbReference type="Rhea" id="RHEA:17325"/>
        <dbReference type="ChEBI" id="CHEBI:15377"/>
        <dbReference type="ChEBI" id="CHEBI:15685"/>
        <dbReference type="ChEBI" id="CHEBI:16845"/>
        <dbReference type="ChEBI" id="CHEBI:57287"/>
        <dbReference type="ChEBI" id="CHEBI:57292"/>
        <dbReference type="EC" id="2.3.1.117"/>
    </reaction>
</comment>
<comment type="pathway">
    <text evidence="1">Amino-acid biosynthesis; L-lysine biosynthesis via DAP pathway; LL-2,6-diaminopimelate from (S)-tetrahydrodipicolinate (succinylase route): step 1/3.</text>
</comment>
<comment type="subunit">
    <text evidence="1">Homotrimer.</text>
</comment>
<comment type="subcellular location">
    <subcellularLocation>
        <location evidence="1">Cytoplasm</location>
    </subcellularLocation>
</comment>
<comment type="similarity">
    <text evidence="1">Belongs to the transferase hexapeptide repeat family.</text>
</comment>
<reference key="1">
    <citation type="submission" date="2005-08" db="EMBL/GenBank/DDBJ databases">
        <title>Complete sequence of chromosome 1 of Nitrosospira multiformis ATCC 25196.</title>
        <authorList>
            <person name="Copeland A."/>
            <person name="Lucas S."/>
            <person name="Lapidus A."/>
            <person name="Barry K."/>
            <person name="Detter J.C."/>
            <person name="Glavina T."/>
            <person name="Hammon N."/>
            <person name="Israni S."/>
            <person name="Pitluck S."/>
            <person name="Chain P."/>
            <person name="Malfatti S."/>
            <person name="Shin M."/>
            <person name="Vergez L."/>
            <person name="Schmutz J."/>
            <person name="Larimer F."/>
            <person name="Land M."/>
            <person name="Hauser L."/>
            <person name="Kyrpides N."/>
            <person name="Lykidis A."/>
            <person name="Richardson P."/>
        </authorList>
    </citation>
    <scope>NUCLEOTIDE SEQUENCE [LARGE SCALE GENOMIC DNA]</scope>
    <source>
        <strain>ATCC 25196 / NCIMB 11849 / C 71</strain>
    </source>
</reference>
<sequence>MDQLQSTIEEAFERRAEMTPRNVEAKLKESITQVLEMLDSGKLRVAEKTDGEWKTHQWIKKAVLLSFRIEDNSFIKGGFSNYFDKVPSKFADYSSRDFRNGGFRVVPPATVRKGAFIASNVVLMPSYVNIGAYVDEGTMVDTWATVGSCAQIGKNVHLSGGVGIGGVLEPVQANPTIIEDNCFIGARSEVVEGVIVGENSVISMGVYIGQSTRIYNRETGEISYGRIPPGSVVVSGSLPSADGKYSLYCAVIVKQVDAKTRAKTGINELLRGI</sequence>
<dbReference type="EC" id="2.3.1.117" evidence="1"/>
<dbReference type="EMBL" id="CP000103">
    <property type="protein sequence ID" value="ABB75146.1"/>
    <property type="molecule type" value="Genomic_DNA"/>
</dbReference>
<dbReference type="RefSeq" id="WP_011381166.1">
    <property type="nucleotide sequence ID" value="NC_007614.1"/>
</dbReference>
<dbReference type="SMR" id="Q2Y7X5"/>
<dbReference type="STRING" id="323848.Nmul_A1851"/>
<dbReference type="KEGG" id="nmu:Nmul_A1851"/>
<dbReference type="eggNOG" id="COG2171">
    <property type="taxonomic scope" value="Bacteria"/>
</dbReference>
<dbReference type="HOGENOM" id="CLU_050859_0_1_4"/>
<dbReference type="OrthoDB" id="9775362at2"/>
<dbReference type="UniPathway" id="UPA00034">
    <property type="reaction ID" value="UER00019"/>
</dbReference>
<dbReference type="Proteomes" id="UP000002718">
    <property type="component" value="Chromosome"/>
</dbReference>
<dbReference type="GO" id="GO:0005737">
    <property type="term" value="C:cytoplasm"/>
    <property type="evidence" value="ECO:0007669"/>
    <property type="project" value="UniProtKB-SubCell"/>
</dbReference>
<dbReference type="GO" id="GO:0008666">
    <property type="term" value="F:2,3,4,5-tetrahydropyridine-2,6-dicarboxylate N-succinyltransferase activity"/>
    <property type="evidence" value="ECO:0007669"/>
    <property type="project" value="UniProtKB-UniRule"/>
</dbReference>
<dbReference type="GO" id="GO:0016779">
    <property type="term" value="F:nucleotidyltransferase activity"/>
    <property type="evidence" value="ECO:0007669"/>
    <property type="project" value="TreeGrafter"/>
</dbReference>
<dbReference type="GO" id="GO:0019877">
    <property type="term" value="P:diaminopimelate biosynthetic process"/>
    <property type="evidence" value="ECO:0007669"/>
    <property type="project" value="UniProtKB-UniRule"/>
</dbReference>
<dbReference type="GO" id="GO:0009089">
    <property type="term" value="P:lysine biosynthetic process via diaminopimelate"/>
    <property type="evidence" value="ECO:0007669"/>
    <property type="project" value="UniProtKB-UniRule"/>
</dbReference>
<dbReference type="CDD" id="cd03350">
    <property type="entry name" value="LbH_THP_succinylT"/>
    <property type="match status" value="1"/>
</dbReference>
<dbReference type="Gene3D" id="2.160.10.10">
    <property type="entry name" value="Hexapeptide repeat proteins"/>
    <property type="match status" value="1"/>
</dbReference>
<dbReference type="Gene3D" id="1.10.166.10">
    <property type="entry name" value="Tetrahydrodipicolinate-N-succinyltransferase, N-terminal domain"/>
    <property type="match status" value="1"/>
</dbReference>
<dbReference type="HAMAP" id="MF_00811">
    <property type="entry name" value="DapD"/>
    <property type="match status" value="1"/>
</dbReference>
<dbReference type="InterPro" id="IPR005664">
    <property type="entry name" value="DapD_Trfase_Hexpep_rpt_fam"/>
</dbReference>
<dbReference type="InterPro" id="IPR001451">
    <property type="entry name" value="Hexapep"/>
</dbReference>
<dbReference type="InterPro" id="IPR018357">
    <property type="entry name" value="Hexapep_transf_CS"/>
</dbReference>
<dbReference type="InterPro" id="IPR023180">
    <property type="entry name" value="THP_succinylTrfase_dom1"/>
</dbReference>
<dbReference type="InterPro" id="IPR037133">
    <property type="entry name" value="THP_succinylTrfase_N_sf"/>
</dbReference>
<dbReference type="InterPro" id="IPR011004">
    <property type="entry name" value="Trimer_LpxA-like_sf"/>
</dbReference>
<dbReference type="NCBIfam" id="TIGR00965">
    <property type="entry name" value="dapD"/>
    <property type="match status" value="1"/>
</dbReference>
<dbReference type="NCBIfam" id="NF008808">
    <property type="entry name" value="PRK11830.1"/>
    <property type="match status" value="1"/>
</dbReference>
<dbReference type="PANTHER" id="PTHR19136:SF52">
    <property type="entry name" value="2,3,4,5-TETRAHYDROPYRIDINE-2,6-DICARBOXYLATE N-SUCCINYLTRANSFERASE"/>
    <property type="match status" value="1"/>
</dbReference>
<dbReference type="PANTHER" id="PTHR19136">
    <property type="entry name" value="MOLYBDENUM COFACTOR GUANYLYLTRANSFERASE"/>
    <property type="match status" value="1"/>
</dbReference>
<dbReference type="Pfam" id="PF14602">
    <property type="entry name" value="Hexapep_2"/>
    <property type="match status" value="1"/>
</dbReference>
<dbReference type="Pfam" id="PF14805">
    <property type="entry name" value="THDPS_N_2"/>
    <property type="match status" value="1"/>
</dbReference>
<dbReference type="SUPFAM" id="SSF51161">
    <property type="entry name" value="Trimeric LpxA-like enzymes"/>
    <property type="match status" value="1"/>
</dbReference>
<dbReference type="PROSITE" id="PS00101">
    <property type="entry name" value="HEXAPEP_TRANSFERASES"/>
    <property type="match status" value="1"/>
</dbReference>
<evidence type="ECO:0000255" key="1">
    <source>
        <dbReference type="HAMAP-Rule" id="MF_00811"/>
    </source>
</evidence>
<accession>Q2Y7X5</accession>
<feature type="chain" id="PRO_1000047156" description="2,3,4,5-tetrahydropyridine-2,6-dicarboxylate N-succinyltransferase">
    <location>
        <begin position="1"/>
        <end position="273"/>
    </location>
</feature>
<feature type="binding site" evidence="1">
    <location>
        <position position="104"/>
    </location>
    <ligand>
        <name>substrate</name>
    </ligand>
</feature>
<feature type="binding site" evidence="1">
    <location>
        <position position="141"/>
    </location>
    <ligand>
        <name>substrate</name>
    </ligand>
</feature>
<organism>
    <name type="scientific">Nitrosospira multiformis (strain ATCC 25196 / NCIMB 11849 / C 71)</name>
    <dbReference type="NCBI Taxonomy" id="323848"/>
    <lineage>
        <taxon>Bacteria</taxon>
        <taxon>Pseudomonadati</taxon>
        <taxon>Pseudomonadota</taxon>
        <taxon>Betaproteobacteria</taxon>
        <taxon>Nitrosomonadales</taxon>
        <taxon>Nitrosomonadaceae</taxon>
        <taxon>Nitrosospira</taxon>
    </lineage>
</organism>